<feature type="chain" id="PRO_0000269712" description="Orexin/Hypocretin receptor type 1">
    <location>
        <begin position="1"/>
        <end position="425"/>
    </location>
</feature>
<feature type="topological domain" description="Extracellular" evidence="1">
    <location>
        <begin position="1"/>
        <end position="46"/>
    </location>
</feature>
<feature type="transmembrane region" description="Helical; Name=1" evidence="1">
    <location>
        <begin position="47"/>
        <end position="67"/>
    </location>
</feature>
<feature type="topological domain" description="Cytoplasmic" evidence="1">
    <location>
        <begin position="68"/>
        <end position="82"/>
    </location>
</feature>
<feature type="transmembrane region" description="Helical; Name=2" evidence="1">
    <location>
        <begin position="83"/>
        <end position="105"/>
    </location>
</feature>
<feature type="topological domain" description="Extracellular" evidence="1">
    <location>
        <begin position="106"/>
        <end position="119"/>
    </location>
</feature>
<feature type="transmembrane region" description="Helical; Name=3" evidence="1">
    <location>
        <begin position="120"/>
        <end position="140"/>
    </location>
</feature>
<feature type="topological domain" description="Cytoplasmic" evidence="1">
    <location>
        <begin position="141"/>
        <end position="160"/>
    </location>
</feature>
<feature type="transmembrane region" description="Helical; Name=4" evidence="1">
    <location>
        <begin position="161"/>
        <end position="182"/>
    </location>
</feature>
<feature type="topological domain" description="Extracellular" evidence="1">
    <location>
        <begin position="183"/>
        <end position="213"/>
    </location>
</feature>
<feature type="transmembrane region" description="Helical; Name=5" evidence="1">
    <location>
        <begin position="214"/>
        <end position="235"/>
    </location>
</feature>
<feature type="topological domain" description="Cytoplasmic" evidence="1">
    <location>
        <begin position="236"/>
        <end position="298"/>
    </location>
</feature>
<feature type="transmembrane region" description="Helical; Name=6" evidence="1">
    <location>
        <begin position="299"/>
        <end position="321"/>
    </location>
</feature>
<feature type="topological domain" description="Extracellular" evidence="1">
    <location>
        <begin position="322"/>
        <end position="336"/>
    </location>
</feature>
<feature type="transmembrane region" description="Helical; Name=7" evidence="1">
    <location>
        <begin position="337"/>
        <end position="360"/>
    </location>
</feature>
<feature type="topological domain" description="Cytoplasmic" evidence="1">
    <location>
        <begin position="361"/>
        <end position="425"/>
    </location>
</feature>
<feature type="region of interest" description="Disordered" evidence="4">
    <location>
        <begin position="1"/>
        <end position="25"/>
    </location>
</feature>
<feature type="region of interest" description="Required for response to orexin-A" evidence="1">
    <location>
        <begin position="26"/>
        <end position="41"/>
    </location>
</feature>
<feature type="site" description="Important for responses to orexin" evidence="1">
    <location>
        <position position="36"/>
    </location>
</feature>
<feature type="glycosylation site" description="N-linked (GlcNAc...) asparagine" evidence="2">
    <location>
        <position position="194"/>
    </location>
</feature>
<feature type="disulfide bond" evidence="1">
    <location>
        <begin position="119"/>
        <end position="202"/>
    </location>
</feature>
<accession>Q0GBZ5</accession>
<keyword id="KW-1003">Cell membrane</keyword>
<keyword id="KW-1015">Disulfide bond</keyword>
<keyword id="KW-0297">G-protein coupled receptor</keyword>
<keyword id="KW-0325">Glycoprotein</keyword>
<keyword id="KW-0472">Membrane</keyword>
<keyword id="KW-0675">Receptor</keyword>
<keyword id="KW-1185">Reference proteome</keyword>
<keyword id="KW-0807">Transducer</keyword>
<keyword id="KW-0812">Transmembrane</keyword>
<keyword id="KW-1133">Transmembrane helix</keyword>
<evidence type="ECO:0000250" key="1">
    <source>
        <dbReference type="UniProtKB" id="O43613"/>
    </source>
</evidence>
<evidence type="ECO:0000255" key="2"/>
<evidence type="ECO:0000255" key="3">
    <source>
        <dbReference type="PROSITE-ProRule" id="PRU00521"/>
    </source>
</evidence>
<evidence type="ECO:0000256" key="4">
    <source>
        <dbReference type="SAM" id="MobiDB-lite"/>
    </source>
</evidence>
<protein>
    <recommendedName>
        <fullName evidence="1">Orexin/Hypocretin receptor type 1</fullName>
    </recommendedName>
</protein>
<organism>
    <name type="scientific">Bos taurus</name>
    <name type="common">Bovine</name>
    <dbReference type="NCBI Taxonomy" id="9913"/>
    <lineage>
        <taxon>Eukaryota</taxon>
        <taxon>Metazoa</taxon>
        <taxon>Chordata</taxon>
        <taxon>Craniata</taxon>
        <taxon>Vertebrata</taxon>
        <taxon>Euteleostomi</taxon>
        <taxon>Mammalia</taxon>
        <taxon>Eutheria</taxon>
        <taxon>Laurasiatheria</taxon>
        <taxon>Artiodactyla</taxon>
        <taxon>Ruminantia</taxon>
        <taxon>Pecora</taxon>
        <taxon>Bovidae</taxon>
        <taxon>Bovinae</taxon>
        <taxon>Bos</taxon>
    </lineage>
</organism>
<gene>
    <name evidence="1" type="primary">HCRTR1</name>
</gene>
<comment type="function">
    <text evidence="1">Moderately selective excitatory receptor for orexin-A and, with a lower affinity, for orexin-B neuropeptide. Triggers an increase in cytoplasmic Ca(2+) levels in response to orexin-A binding.</text>
</comment>
<comment type="subcellular location">
    <subcellularLocation>
        <location evidence="1">Cell membrane</location>
        <topology evidence="1">Multi-pass membrane protein</topology>
    </subcellularLocation>
</comment>
<comment type="domain">
    <text evidence="1">The N-terminal region is required for orexin signaling.</text>
</comment>
<comment type="similarity">
    <text evidence="3">Belongs to the G-protein coupled receptor 1 family.</text>
</comment>
<proteinExistence type="evidence at transcript level"/>
<sequence>MEPSATPGPQMGVPTEGRERSPEPPDYEDEFLRYLWRDYLYPKQYEWVLIAAYVAVFFVALVGNTLVCLAVWRNHHMRTVTNYFIVNLSLADVLVTAICLPASLLVDITESWLFGHALCKVIPYLQAVSVSVAVLTLSFIALDRWYAICHPLLFKSTARRARGSILGIWAVSLAVMVPQAAVMECSSVLPELANRTRLFSVCDERWADDLYPKIYHSCFFIVTYLAPLGLMAMAYFQIFRKLWGRQIPGTTSALVRNWKRPSVQLEEQGQGLGAEPQPRARAFLAEVKQMRARRKTAKMLMVVLLVFALCYLPISVLNVLKRVFGMFRQASDREAVYACFTFSHWLVYANSAANPIIYNFLSGKFREQFKAAFSCCLPGLGPCVSLKVPSPRSSASHKSLSLQSRCSVSKASEHVLLTSVTTVLP</sequence>
<name>OX1R_BOVIN</name>
<dbReference type="EMBL" id="DQ874350">
    <property type="protein sequence ID" value="ABI34075.1"/>
    <property type="molecule type" value="mRNA"/>
</dbReference>
<dbReference type="RefSeq" id="NP_001041647.1">
    <property type="nucleotide sequence ID" value="NM_001048182.1"/>
</dbReference>
<dbReference type="RefSeq" id="XP_024854686.1">
    <property type="nucleotide sequence ID" value="XM_024998918.2"/>
</dbReference>
<dbReference type="RefSeq" id="XP_024854712.1">
    <property type="nucleotide sequence ID" value="XM_024998944.2"/>
</dbReference>
<dbReference type="RefSeq" id="XP_059747731.1">
    <property type="nucleotide sequence ID" value="XM_059891748.1"/>
</dbReference>
<dbReference type="RefSeq" id="XP_059747738.1">
    <property type="nucleotide sequence ID" value="XM_059891755.1"/>
</dbReference>
<dbReference type="SMR" id="Q0GBZ5"/>
<dbReference type="FunCoup" id="Q0GBZ5">
    <property type="interactions" value="146"/>
</dbReference>
<dbReference type="STRING" id="9913.ENSBTAP00000062326"/>
<dbReference type="GlyCosmos" id="Q0GBZ5">
    <property type="glycosylation" value="1 site, No reported glycans"/>
</dbReference>
<dbReference type="GlyGen" id="Q0GBZ5">
    <property type="glycosylation" value="1 site"/>
</dbReference>
<dbReference type="PaxDb" id="9913-ENSBTAP00000013687"/>
<dbReference type="Ensembl" id="ENSBTAT00000076106.2">
    <property type="protein sequence ID" value="ENSBTAP00000062326.1"/>
    <property type="gene ID" value="ENSBTAG00000010366.7"/>
</dbReference>
<dbReference type="GeneID" id="282248"/>
<dbReference type="KEGG" id="bta:282248"/>
<dbReference type="CTD" id="3061"/>
<dbReference type="VEuPathDB" id="HostDB:ENSBTAG00000010366"/>
<dbReference type="VGNC" id="VGNC:29781">
    <property type="gene designation" value="HCRTR1"/>
</dbReference>
<dbReference type="eggNOG" id="KOG3656">
    <property type="taxonomic scope" value="Eukaryota"/>
</dbReference>
<dbReference type="GeneTree" id="ENSGT01130000278294"/>
<dbReference type="HOGENOM" id="CLU_009579_6_3_1"/>
<dbReference type="InParanoid" id="Q0GBZ5"/>
<dbReference type="OMA" id="HTLCKVI"/>
<dbReference type="OrthoDB" id="9986530at2759"/>
<dbReference type="TreeFam" id="TF315303"/>
<dbReference type="Reactome" id="R-BTA-389397">
    <property type="pathway name" value="Orexin and neuropeptides FF and QRFP bind to their respective receptors"/>
</dbReference>
<dbReference type="Reactome" id="R-BTA-416476">
    <property type="pathway name" value="G alpha (q) signalling events"/>
</dbReference>
<dbReference type="Proteomes" id="UP000009136">
    <property type="component" value="Chromosome 2"/>
</dbReference>
<dbReference type="Bgee" id="ENSBTAG00000010366">
    <property type="expression patterns" value="Expressed in bone marrow and 86 other cell types or tissues"/>
</dbReference>
<dbReference type="GO" id="GO:0005886">
    <property type="term" value="C:plasma membrane"/>
    <property type="evidence" value="ECO:0000250"/>
    <property type="project" value="UniProtKB"/>
</dbReference>
<dbReference type="GO" id="GO:0004930">
    <property type="term" value="F:G protein-coupled receptor activity"/>
    <property type="evidence" value="ECO:0000318"/>
    <property type="project" value="GO_Central"/>
</dbReference>
<dbReference type="GO" id="GO:0016499">
    <property type="term" value="F:orexin receptor activity"/>
    <property type="evidence" value="ECO:0000250"/>
    <property type="project" value="UniProtKB"/>
</dbReference>
<dbReference type="GO" id="GO:0032870">
    <property type="term" value="P:cellular response to hormone stimulus"/>
    <property type="evidence" value="ECO:0000318"/>
    <property type="project" value="GO_Central"/>
</dbReference>
<dbReference type="GO" id="GO:0007631">
    <property type="term" value="P:feeding behavior"/>
    <property type="evidence" value="ECO:0007669"/>
    <property type="project" value="InterPro"/>
</dbReference>
<dbReference type="GO" id="GO:0007218">
    <property type="term" value="P:neuropeptide signaling pathway"/>
    <property type="evidence" value="ECO:0000250"/>
    <property type="project" value="UniProtKB"/>
</dbReference>
<dbReference type="GO" id="GO:0070374">
    <property type="term" value="P:positive regulation of ERK1 and ERK2 cascade"/>
    <property type="evidence" value="ECO:0007669"/>
    <property type="project" value="Ensembl"/>
</dbReference>
<dbReference type="GO" id="GO:0051480">
    <property type="term" value="P:regulation of cytosolic calcium ion concentration"/>
    <property type="evidence" value="ECO:0000250"/>
    <property type="project" value="UniProtKB"/>
</dbReference>
<dbReference type="CDD" id="cd15208">
    <property type="entry name" value="7tmA_OXR"/>
    <property type="match status" value="1"/>
</dbReference>
<dbReference type="FunFam" id="1.20.1070.10:FF:000075">
    <property type="entry name" value="orexin receptor type 2"/>
    <property type="match status" value="1"/>
</dbReference>
<dbReference type="Gene3D" id="1.20.1070.10">
    <property type="entry name" value="Rhodopsin 7-helix transmembrane proteins"/>
    <property type="match status" value="1"/>
</dbReference>
<dbReference type="InterPro" id="IPR000276">
    <property type="entry name" value="GPCR_Rhodpsn"/>
</dbReference>
<dbReference type="InterPro" id="IPR017452">
    <property type="entry name" value="GPCR_Rhodpsn_7TM"/>
</dbReference>
<dbReference type="InterPro" id="IPR000204">
    <property type="entry name" value="Orexin_rcpt"/>
</dbReference>
<dbReference type="InterPro" id="IPR004059">
    <property type="entry name" value="OX1R"/>
</dbReference>
<dbReference type="PANTHER" id="PTHR45695:SF32">
    <property type="entry name" value="G PROTEIN-COUPLED RECEPTOR 15-LIKE"/>
    <property type="match status" value="1"/>
</dbReference>
<dbReference type="PANTHER" id="PTHR45695">
    <property type="entry name" value="LEUCOKININ RECEPTOR-RELATED"/>
    <property type="match status" value="1"/>
</dbReference>
<dbReference type="Pfam" id="PF00001">
    <property type="entry name" value="7tm_1"/>
    <property type="match status" value="1"/>
</dbReference>
<dbReference type="PRINTS" id="PR00237">
    <property type="entry name" value="GPCRRHODOPSN"/>
</dbReference>
<dbReference type="PRINTS" id="PR01521">
    <property type="entry name" value="OREXIN1R"/>
</dbReference>
<dbReference type="PRINTS" id="PR01064">
    <property type="entry name" value="OREXINR"/>
</dbReference>
<dbReference type="SMART" id="SM01381">
    <property type="entry name" value="7TM_GPCR_Srsx"/>
    <property type="match status" value="1"/>
</dbReference>
<dbReference type="SUPFAM" id="SSF81321">
    <property type="entry name" value="Family A G protein-coupled receptor-like"/>
    <property type="match status" value="1"/>
</dbReference>
<dbReference type="PROSITE" id="PS00237">
    <property type="entry name" value="G_PROTEIN_RECEP_F1_1"/>
    <property type="match status" value="1"/>
</dbReference>
<dbReference type="PROSITE" id="PS50262">
    <property type="entry name" value="G_PROTEIN_RECEP_F1_2"/>
    <property type="match status" value="1"/>
</dbReference>
<reference key="1">
    <citation type="submission" date="2006-07" db="EMBL/GenBank/DDBJ databases">
        <authorList>
            <person name="Zhang L."/>
            <person name="Chen H."/>
            <person name="Zhang A.L."/>
            <person name="Zhang C.L."/>
            <person name="Zhang L.Z."/>
            <person name="Zhu Z.Y."/>
        </authorList>
    </citation>
    <scope>NUCLEOTIDE SEQUENCE [MRNA]</scope>
</reference>